<sequence length="412" mass="45842">MQYEKVKPPENGEKIRYENGKLIVPDNPIIPYFEGDGIGKDVVPAAIRVLDAAADKIGKEVVWFQVYAGEDAYKLYGNYLPDDTLNAIKEFRVALKGPLTTPVGGGYRSLNVTIRQVLDLYANVRPVYYLKGVPSPIKHPEKVNFVIFRENTEDVYAGIEWPRGSEEALKLIRFLKNEFGVTIREDSGIGIKPISEFATKRLVRMAIRYAIENNRKSVTLVHKGNIMKYTEGAFRDWGYEVAKQEFGEYCITEDELWDKYGGKQPEGKIVVKDRIADNMFQQILTRTDEYDVIALPNLNGDYLSDAAAALIGGLGIAPGSNIGDGIGVFEPVHGSAPKYAGQNKVNPTAEILTGALMFEYIGWKDASEMIKKAVEMTISSGIVTYDIHRHMGGTKVGTREFAEAVVENLQSL</sequence>
<protein>
    <recommendedName>
        <fullName evidence="5">Isocitrate dehydrogenase [NADP]</fullName>
        <shortName evidence="4">IDH</shortName>
        <ecNumber evidence="2 3">1.1.1.42</ecNumber>
    </recommendedName>
    <alternativeName>
        <fullName>IDP</fullName>
    </alternativeName>
    <alternativeName>
        <fullName>NADP(+)-specific ICDH</fullName>
    </alternativeName>
    <alternativeName>
        <fullName>Oxalosuccinate decarboxylase</fullName>
    </alternativeName>
</protein>
<feature type="chain" id="PRO_0000083572" description="Isocitrate dehydrogenase [NADP]">
    <location>
        <begin position="1"/>
        <end position="412"/>
    </location>
</feature>
<feature type="binding site" evidence="1">
    <location>
        <position position="100"/>
    </location>
    <ligand>
        <name>NADP(+)</name>
        <dbReference type="ChEBI" id="CHEBI:58349"/>
    </ligand>
</feature>
<feature type="binding site" evidence="1">
    <location>
        <position position="109"/>
    </location>
    <ligand>
        <name>D-threo-isocitrate</name>
        <dbReference type="ChEBI" id="CHEBI:15562"/>
    </ligand>
</feature>
<feature type="binding site" evidence="1">
    <location>
        <position position="111"/>
    </location>
    <ligand>
        <name>D-threo-isocitrate</name>
        <dbReference type="ChEBI" id="CHEBI:15562"/>
    </ligand>
</feature>
<feature type="binding site" evidence="1">
    <location>
        <position position="115"/>
    </location>
    <ligand>
        <name>D-threo-isocitrate</name>
        <dbReference type="ChEBI" id="CHEBI:15562"/>
    </ligand>
</feature>
<feature type="binding site" evidence="1">
    <location>
        <position position="125"/>
    </location>
    <ligand>
        <name>D-threo-isocitrate</name>
        <dbReference type="ChEBI" id="CHEBI:15562"/>
    </ligand>
</feature>
<feature type="binding site" evidence="1">
    <location>
        <position position="149"/>
    </location>
    <ligand>
        <name>D-threo-isocitrate</name>
        <dbReference type="ChEBI" id="CHEBI:15562"/>
    </ligand>
</feature>
<feature type="binding site" evidence="1">
    <location>
        <position position="301"/>
    </location>
    <ligand>
        <name>Mg(2+)</name>
        <dbReference type="ChEBI" id="CHEBI:18420"/>
    </ligand>
</feature>
<feature type="binding site" evidence="1">
    <location>
        <begin position="333"/>
        <end position="339"/>
    </location>
    <ligand>
        <name>NADP(+)</name>
        <dbReference type="ChEBI" id="CHEBI:58349"/>
    </ligand>
</feature>
<feature type="binding site" evidence="1">
    <location>
        <position position="346"/>
    </location>
    <ligand>
        <name>NADP(+)</name>
        <dbReference type="ChEBI" id="CHEBI:58349"/>
    </ligand>
</feature>
<feature type="binding site" evidence="1">
    <location>
        <position position="385"/>
    </location>
    <ligand>
        <name>NADP(+)</name>
        <dbReference type="ChEBI" id="CHEBI:58349"/>
    </ligand>
</feature>
<feature type="binding site" evidence="1">
    <location>
        <position position="389"/>
    </location>
    <ligand>
        <name>NADP(+)</name>
        <dbReference type="ChEBI" id="CHEBI:58349"/>
    </ligand>
</feature>
<feature type="site" description="Critical for catalysis" evidence="1">
    <location>
        <position position="156"/>
    </location>
</feature>
<feature type="site" description="Critical for catalysis" evidence="1">
    <location>
        <position position="223"/>
    </location>
</feature>
<feature type="strand" evidence="8">
    <location>
        <begin position="16"/>
        <end position="18"/>
    </location>
</feature>
<feature type="strand" evidence="8">
    <location>
        <begin position="21"/>
        <end position="23"/>
    </location>
</feature>
<feature type="strand" evidence="8">
    <location>
        <begin position="26"/>
        <end position="33"/>
    </location>
</feature>
<feature type="helix" evidence="8">
    <location>
        <begin position="39"/>
        <end position="57"/>
    </location>
</feature>
<feature type="strand" evidence="8">
    <location>
        <begin position="62"/>
        <end position="65"/>
    </location>
</feature>
<feature type="helix" evidence="8">
    <location>
        <begin position="70"/>
        <end position="76"/>
    </location>
</feature>
<feature type="helix" evidence="8">
    <location>
        <begin position="82"/>
        <end position="91"/>
    </location>
</feature>
<feature type="strand" evidence="8">
    <location>
        <begin position="93"/>
        <end position="96"/>
    </location>
</feature>
<feature type="strand" evidence="8">
    <location>
        <begin position="103"/>
        <end position="108"/>
    </location>
</feature>
<feature type="helix" evidence="8">
    <location>
        <begin position="109"/>
        <end position="117"/>
    </location>
</feature>
<feature type="strand" evidence="8">
    <location>
        <begin position="122"/>
        <end position="128"/>
    </location>
</feature>
<feature type="strand" evidence="8">
    <location>
        <begin position="136"/>
        <end position="138"/>
    </location>
</feature>
<feature type="helix" evidence="8">
    <location>
        <begin position="140"/>
        <end position="142"/>
    </location>
</feature>
<feature type="strand" evidence="8">
    <location>
        <begin position="144"/>
        <end position="150"/>
    </location>
</feature>
<feature type="strand" evidence="8">
    <location>
        <begin position="152"/>
        <end position="154"/>
    </location>
</feature>
<feature type="helix" evidence="8">
    <location>
        <begin position="155"/>
        <end position="157"/>
    </location>
</feature>
<feature type="helix" evidence="8">
    <location>
        <begin position="166"/>
        <end position="179"/>
    </location>
</feature>
<feature type="strand" evidence="8">
    <location>
        <begin position="187"/>
        <end position="195"/>
    </location>
</feature>
<feature type="helix" evidence="8">
    <location>
        <begin position="196"/>
        <end position="212"/>
    </location>
</feature>
<feature type="strand" evidence="8">
    <location>
        <begin position="216"/>
        <end position="222"/>
    </location>
</feature>
<feature type="turn" evidence="8">
    <location>
        <begin position="224"/>
        <end position="226"/>
    </location>
</feature>
<feature type="turn" evidence="8">
    <location>
        <begin position="228"/>
        <end position="230"/>
    </location>
</feature>
<feature type="helix" evidence="8">
    <location>
        <begin position="231"/>
        <end position="245"/>
    </location>
</feature>
<feature type="turn" evidence="8">
    <location>
        <begin position="247"/>
        <end position="249"/>
    </location>
</feature>
<feature type="helix" evidence="8">
    <location>
        <begin position="253"/>
        <end position="260"/>
    </location>
</feature>
<feature type="strand" evidence="8">
    <location>
        <begin position="269"/>
        <end position="275"/>
    </location>
</feature>
<feature type="helix" evidence="8">
    <location>
        <begin position="276"/>
        <end position="278"/>
    </location>
</feature>
<feature type="helix" evidence="8">
    <location>
        <begin position="279"/>
        <end position="285"/>
    </location>
</feature>
<feature type="helix" evidence="8">
    <location>
        <begin position="287"/>
        <end position="289"/>
    </location>
</feature>
<feature type="strand" evidence="8">
    <location>
        <begin position="292"/>
        <end position="295"/>
    </location>
</feature>
<feature type="helix" evidence="8">
    <location>
        <begin position="297"/>
        <end position="310"/>
    </location>
</feature>
<feature type="helix" evidence="8">
    <location>
        <begin position="314"/>
        <end position="316"/>
    </location>
</feature>
<feature type="strand" evidence="8">
    <location>
        <begin position="318"/>
        <end position="323"/>
    </location>
</feature>
<feature type="strand" evidence="8">
    <location>
        <begin position="326"/>
        <end position="333"/>
    </location>
</feature>
<feature type="turn" evidence="8">
    <location>
        <begin position="338"/>
        <end position="341"/>
    </location>
</feature>
<feature type="helix" evidence="8">
    <location>
        <begin position="348"/>
        <end position="360"/>
    </location>
</feature>
<feature type="helix" evidence="8">
    <location>
        <begin position="364"/>
        <end position="379"/>
    </location>
</feature>
<feature type="helix" evidence="8">
    <location>
        <begin position="385"/>
        <end position="391"/>
    </location>
</feature>
<feature type="strand" evidence="8">
    <location>
        <begin position="393"/>
        <end position="395"/>
    </location>
</feature>
<feature type="helix" evidence="8">
    <location>
        <begin position="398"/>
        <end position="411"/>
    </location>
</feature>
<reference key="1">
    <citation type="journal article" date="1997" name="Arch. Microbiol.">
        <title>Biochemical and phylogenetic characterization of isocitrate dehydrogenase from a hyperthermophilic archaeon, Archaeoglobus fulgidus.</title>
        <authorList>
            <person name="Steen I.H."/>
            <person name="Lien T."/>
            <person name="Birkeland N.-K."/>
        </authorList>
    </citation>
    <scope>NUCLEOTIDE SEQUENCE [GENOMIC DNA]</scope>
    <scope>PROTEIN SEQUENCE OF 1-27</scope>
    <scope>FUNCTION</scope>
    <scope>CATALYTIC ACTIVITY</scope>
    <scope>COFACTOR</scope>
    <scope>BIOPHYSICOCHEMICAL PROPERTIES</scope>
    <scope>SUBUNIT</scope>
    <source>
        <strain>ATCC 49558 / DSM 4304 / JCM 9628 / NBRC 100126 / VC-16</strain>
    </source>
</reference>
<reference key="2">
    <citation type="journal article" date="1997" name="Nature">
        <title>The complete genome sequence of the hyperthermophilic, sulphate-reducing archaeon Archaeoglobus fulgidus.</title>
        <authorList>
            <person name="Klenk H.-P."/>
            <person name="Clayton R.A."/>
            <person name="Tomb J.-F."/>
            <person name="White O."/>
            <person name="Nelson K.E."/>
            <person name="Ketchum K.A."/>
            <person name="Dodson R.J."/>
            <person name="Gwinn M.L."/>
            <person name="Hickey E.K."/>
            <person name="Peterson J.D."/>
            <person name="Richardson D.L."/>
            <person name="Kerlavage A.R."/>
            <person name="Graham D.E."/>
            <person name="Kyrpides N.C."/>
            <person name="Fleischmann R.D."/>
            <person name="Quackenbush J."/>
            <person name="Lee N.H."/>
            <person name="Sutton G.G."/>
            <person name="Gill S.R."/>
            <person name="Kirkness E.F."/>
            <person name="Dougherty B.A."/>
            <person name="McKenney K."/>
            <person name="Adams M.D."/>
            <person name="Loftus B.J."/>
            <person name="Peterson S.N."/>
            <person name="Reich C.I."/>
            <person name="McNeil L.K."/>
            <person name="Badger J.H."/>
            <person name="Glodek A."/>
            <person name="Zhou L."/>
            <person name="Overbeek R."/>
            <person name="Gocayne J.D."/>
            <person name="Weidman J.F."/>
            <person name="McDonald L.A."/>
            <person name="Utterback T.R."/>
            <person name="Cotton M.D."/>
            <person name="Spriggs T."/>
            <person name="Artiach P."/>
            <person name="Kaine B.P."/>
            <person name="Sykes S.M."/>
            <person name="Sadow P.W."/>
            <person name="D'Andrea K.P."/>
            <person name="Bowman C."/>
            <person name="Fujii C."/>
            <person name="Garland S.A."/>
            <person name="Mason T.M."/>
            <person name="Olsen G.J."/>
            <person name="Fraser C.M."/>
            <person name="Smith H.O."/>
            <person name="Woese C.R."/>
            <person name="Venter J.C."/>
        </authorList>
    </citation>
    <scope>NUCLEOTIDE SEQUENCE [LARGE SCALE GENOMIC DNA]</scope>
    <source>
        <strain>ATCC 49558 / DSM 4304 / JCM 9628 / NBRC 100126 / VC-16</strain>
    </source>
</reference>
<reference evidence="7" key="3">
    <citation type="journal article" date="2007" name="Extremophiles">
        <title>Thermal stability of isocitrate dehydrogenase from Archaeoglobus fulgidus studied by crystal structure analysis and engineering of chimers.</title>
        <authorList>
            <person name="Stokke R."/>
            <person name="Karlstroem M."/>
            <person name="Yang N."/>
            <person name="Leiros I."/>
            <person name="Ladenstein R."/>
            <person name="Birkeland N.K."/>
            <person name="Steen I.H."/>
        </authorList>
    </citation>
    <scope>X-RAY CRYSTALLOGRAPHY (2.50 ANGSTROMS) IN COMPLEX WITH ZN(2+)</scope>
    <scope>CATALYTIC ACTIVITY</scope>
    <scope>BIOPHYSICOCHEMICAL PROPERTIES</scope>
    <scope>SUBUNIT</scope>
    <scope>DOMAIN</scope>
</reference>
<dbReference type="EC" id="1.1.1.42" evidence="2 3"/>
<dbReference type="EMBL" id="Z96105">
    <property type="protein sequence ID" value="CAB09535.1"/>
    <property type="molecule type" value="Genomic_DNA"/>
</dbReference>
<dbReference type="EMBL" id="AE000782">
    <property type="protein sequence ID" value="AAB90591.1"/>
    <property type="molecule type" value="Genomic_DNA"/>
</dbReference>
<dbReference type="PIR" id="G69330">
    <property type="entry name" value="G69330"/>
</dbReference>
<dbReference type="RefSeq" id="WP_010878150.1">
    <property type="nucleotide sequence ID" value="NC_000917.1"/>
</dbReference>
<dbReference type="PDB" id="2IV0">
    <property type="method" value="X-ray"/>
    <property type="resolution" value="2.50 A"/>
    <property type="chains" value="A/B=1-412"/>
</dbReference>
<dbReference type="PDBsum" id="2IV0"/>
<dbReference type="SMR" id="O29610"/>
<dbReference type="STRING" id="224325.AF_0647"/>
<dbReference type="PaxDb" id="224325-AF_0647"/>
<dbReference type="EnsemblBacteria" id="AAB90591">
    <property type="protein sequence ID" value="AAB90591"/>
    <property type="gene ID" value="AF_0647"/>
</dbReference>
<dbReference type="GeneID" id="1483865"/>
<dbReference type="KEGG" id="afu:AF_0647"/>
<dbReference type="eggNOG" id="arCOG01164">
    <property type="taxonomic scope" value="Archaea"/>
</dbReference>
<dbReference type="HOGENOM" id="CLU_031953_7_1_2"/>
<dbReference type="OrthoDB" id="23624at2157"/>
<dbReference type="PhylomeDB" id="O29610"/>
<dbReference type="BRENDA" id="1.1.1.42">
    <property type="organism ID" value="414"/>
</dbReference>
<dbReference type="SABIO-RK" id="O29610"/>
<dbReference type="EvolutionaryTrace" id="O29610"/>
<dbReference type="Proteomes" id="UP000002199">
    <property type="component" value="Chromosome"/>
</dbReference>
<dbReference type="GO" id="GO:0004450">
    <property type="term" value="F:isocitrate dehydrogenase (NADP+) activity"/>
    <property type="evidence" value="ECO:0007669"/>
    <property type="project" value="UniProtKB-EC"/>
</dbReference>
<dbReference type="GO" id="GO:0000287">
    <property type="term" value="F:magnesium ion binding"/>
    <property type="evidence" value="ECO:0007669"/>
    <property type="project" value="InterPro"/>
</dbReference>
<dbReference type="GO" id="GO:0051287">
    <property type="term" value="F:NAD binding"/>
    <property type="evidence" value="ECO:0007669"/>
    <property type="project" value="InterPro"/>
</dbReference>
<dbReference type="GO" id="GO:0006097">
    <property type="term" value="P:glyoxylate cycle"/>
    <property type="evidence" value="ECO:0007669"/>
    <property type="project" value="UniProtKB-KW"/>
</dbReference>
<dbReference type="GO" id="GO:0006099">
    <property type="term" value="P:tricarboxylic acid cycle"/>
    <property type="evidence" value="ECO:0007669"/>
    <property type="project" value="UniProtKB-KW"/>
</dbReference>
<dbReference type="Gene3D" id="3.40.718.10">
    <property type="entry name" value="Isopropylmalate Dehydrogenase"/>
    <property type="match status" value="1"/>
</dbReference>
<dbReference type="InterPro" id="IPR019818">
    <property type="entry name" value="IsoCit/isopropylmalate_DH_CS"/>
</dbReference>
<dbReference type="InterPro" id="IPR004439">
    <property type="entry name" value="Isocitrate_DH_NADP_dimer_prok"/>
</dbReference>
<dbReference type="InterPro" id="IPR024084">
    <property type="entry name" value="IsoPropMal-DH-like_dom"/>
</dbReference>
<dbReference type="NCBIfam" id="NF005036">
    <property type="entry name" value="PRK06451.1"/>
    <property type="match status" value="1"/>
</dbReference>
<dbReference type="NCBIfam" id="NF005425">
    <property type="entry name" value="PRK07006.1"/>
    <property type="match status" value="1"/>
</dbReference>
<dbReference type="NCBIfam" id="TIGR00183">
    <property type="entry name" value="prok_nadp_idh"/>
    <property type="match status" value="1"/>
</dbReference>
<dbReference type="PANTHER" id="PTHR43504">
    <property type="entry name" value="ISOCITRATE DEHYDROGENASE [NADP]"/>
    <property type="match status" value="1"/>
</dbReference>
<dbReference type="PANTHER" id="PTHR43504:SF1">
    <property type="entry name" value="ISOCITRATE DEHYDROGENASE [NADP]"/>
    <property type="match status" value="1"/>
</dbReference>
<dbReference type="Pfam" id="PF00180">
    <property type="entry name" value="Iso_dh"/>
    <property type="match status" value="1"/>
</dbReference>
<dbReference type="SMART" id="SM01329">
    <property type="entry name" value="Iso_dh"/>
    <property type="match status" value="1"/>
</dbReference>
<dbReference type="SUPFAM" id="SSF53659">
    <property type="entry name" value="Isocitrate/Isopropylmalate dehydrogenase-like"/>
    <property type="match status" value="1"/>
</dbReference>
<dbReference type="PROSITE" id="PS00470">
    <property type="entry name" value="IDH_IMDH"/>
    <property type="match status" value="1"/>
</dbReference>
<organism>
    <name type="scientific">Archaeoglobus fulgidus (strain ATCC 49558 / DSM 4304 / JCM 9628 / NBRC 100126 / VC-16)</name>
    <dbReference type="NCBI Taxonomy" id="224325"/>
    <lineage>
        <taxon>Archaea</taxon>
        <taxon>Methanobacteriati</taxon>
        <taxon>Methanobacteriota</taxon>
        <taxon>Archaeoglobi</taxon>
        <taxon>Archaeoglobales</taxon>
        <taxon>Archaeoglobaceae</taxon>
        <taxon>Archaeoglobus</taxon>
    </lineage>
</organism>
<keyword id="KW-0002">3D-structure</keyword>
<keyword id="KW-0903">Direct protein sequencing</keyword>
<keyword id="KW-0329">Glyoxylate bypass</keyword>
<keyword id="KW-0460">Magnesium</keyword>
<keyword id="KW-0464">Manganese</keyword>
<keyword id="KW-0479">Metal-binding</keyword>
<keyword id="KW-0521">NADP</keyword>
<keyword id="KW-0560">Oxidoreductase</keyword>
<keyword id="KW-1185">Reference proteome</keyword>
<keyword id="KW-0816">Tricarboxylic acid cycle</keyword>
<accession>O29610</accession>
<accession>O31221</accession>
<evidence type="ECO:0000250" key="1">
    <source>
        <dbReference type="UniProtKB" id="P08200"/>
    </source>
</evidence>
<evidence type="ECO:0000269" key="2">
    <source>
    </source>
</evidence>
<evidence type="ECO:0000269" key="3">
    <source>
    </source>
</evidence>
<evidence type="ECO:0000303" key="4">
    <source>
    </source>
</evidence>
<evidence type="ECO:0000303" key="5">
    <source>
    </source>
</evidence>
<evidence type="ECO:0000305" key="6"/>
<evidence type="ECO:0007744" key="7">
    <source>
        <dbReference type="PDB" id="2IV0"/>
    </source>
</evidence>
<evidence type="ECO:0007829" key="8">
    <source>
        <dbReference type="PDB" id="2IV0"/>
    </source>
</evidence>
<proteinExistence type="evidence at protein level"/>
<gene>
    <name evidence="5" type="primary">icd</name>
    <name type="ordered locus">AF_0647</name>
</gene>
<comment type="function">
    <text evidence="3">Catalyzes the oxidative decarboxylation of isocitrate to 2-oxoglutarate and carbon dioxide with the concomitant reduction of NADP(+) (PubMed:9325430). NAD(+) can replace NADP(+) with low efficiency (PubMed:9325430).</text>
</comment>
<comment type="catalytic activity">
    <reaction evidence="2 3">
        <text>D-threo-isocitrate + NADP(+) = 2-oxoglutarate + CO2 + NADPH</text>
        <dbReference type="Rhea" id="RHEA:19629"/>
        <dbReference type="ChEBI" id="CHEBI:15562"/>
        <dbReference type="ChEBI" id="CHEBI:16526"/>
        <dbReference type="ChEBI" id="CHEBI:16810"/>
        <dbReference type="ChEBI" id="CHEBI:57783"/>
        <dbReference type="ChEBI" id="CHEBI:58349"/>
        <dbReference type="EC" id="1.1.1.42"/>
    </reaction>
</comment>
<comment type="cofactor">
    <cofactor evidence="3">
        <name>Mg(2+)</name>
        <dbReference type="ChEBI" id="CHEBI:18420"/>
    </cofactor>
    <cofactor evidence="3">
        <name>Mn(2+)</name>
        <dbReference type="ChEBI" id="CHEBI:29035"/>
    </cofactor>
    <text evidence="1 3">Binds 1 Mg(2+) or Mn(2+) ion per subunit (By similarity). Mg(2+) can partially replace Mn(2+), resulting in approximately 70% of the maximal activity with Mn(2+) in vitro (PubMed:9325430).</text>
</comment>
<comment type="biophysicochemical properties">
    <kinetics>
        <KM evidence="3">118 uM for D,L-isocitrate (at 60 degrees Celsius in the presence of Mg(2+))</KM>
        <KM evidence="2">332 uM for isocitrate (at 60 degrees Celsius)</KM>
        <KM evidence="3">30 uM for NADP(+) (at 60 degrees Celsius in the presence of Mg(2+))</KM>
        <KM evidence="2">16.5 uM for NADP(+) (at 60 degrees Celsius)</KM>
        <KM evidence="3">5.4 mM for NAD(+)</KM>
        <Vmax evidence="3">141.0 umol/min/mg enzyme towards NADP(+) (at 60 degrees Celsius in the presence of Mg(2+))</Vmax>
        <Vmax evidence="3">14.5 umol/min/mg enzyme towards NAD(+)</Vmax>
        <text evidence="2">kcat is 254.6 sec(-1) with isocitrate as substrate (at 60 degrees Celsius) (PubMed:17401542). kcat is 219.3 sec(-1) with NADP(+) as substrate (at 60 degrees Celsius) (PubMed:17401542).</text>
    </kinetics>
    <phDependence>
        <text evidence="3">Optimum pH is 8.6 (PubMed:9325430). Activity is maximal over a broad pH range of 8.0-9.0 (PubMed:9325430).</text>
    </phDependence>
    <temperatureDependence>
        <text evidence="2 3">Optimum temperature is 90 degrees Celsius or higher (PubMed:9325430). Thermostable (PubMed:17401542, PubMed:9325430).</text>
    </temperatureDependence>
</comment>
<comment type="subunit">
    <text evidence="2 3">Homodimer.</text>
</comment>
<comment type="domain">
    <text evidence="2">Consists of three domains: a large domain, a small domain and a clasp domain.</text>
</comment>
<comment type="similarity">
    <text evidence="6">Belongs to the isocitrate and isopropylmalate dehydrogenases family.</text>
</comment>
<name>IDH_ARCFU</name>